<dbReference type="EMBL" id="AE008923">
    <property type="protein sequence ID" value="AAM38752.1"/>
    <property type="molecule type" value="Genomic_DNA"/>
</dbReference>
<dbReference type="SMR" id="Q8PFR3"/>
<dbReference type="KEGG" id="xac:XAC3915"/>
<dbReference type="eggNOG" id="COG2003">
    <property type="taxonomic scope" value="Bacteria"/>
</dbReference>
<dbReference type="HOGENOM" id="CLU_073529_0_1_6"/>
<dbReference type="Proteomes" id="UP000000576">
    <property type="component" value="Chromosome"/>
</dbReference>
<dbReference type="GO" id="GO:0046872">
    <property type="term" value="F:metal ion binding"/>
    <property type="evidence" value="ECO:0007669"/>
    <property type="project" value="UniProtKB-KW"/>
</dbReference>
<dbReference type="GO" id="GO:0008237">
    <property type="term" value="F:metallopeptidase activity"/>
    <property type="evidence" value="ECO:0007669"/>
    <property type="project" value="UniProtKB-KW"/>
</dbReference>
<dbReference type="GO" id="GO:0006508">
    <property type="term" value="P:proteolysis"/>
    <property type="evidence" value="ECO:0007669"/>
    <property type="project" value="UniProtKB-KW"/>
</dbReference>
<dbReference type="CDD" id="cd08071">
    <property type="entry name" value="MPN_DUF2466"/>
    <property type="match status" value="1"/>
</dbReference>
<dbReference type="Gene3D" id="3.40.140.10">
    <property type="entry name" value="Cytidine Deaminase, domain 2"/>
    <property type="match status" value="1"/>
</dbReference>
<dbReference type="InterPro" id="IPR037518">
    <property type="entry name" value="MPN"/>
</dbReference>
<dbReference type="InterPro" id="IPR025657">
    <property type="entry name" value="RadC_JAB"/>
</dbReference>
<dbReference type="InterPro" id="IPR010994">
    <property type="entry name" value="RuvA_2-like"/>
</dbReference>
<dbReference type="InterPro" id="IPR001405">
    <property type="entry name" value="UPF0758"/>
</dbReference>
<dbReference type="InterPro" id="IPR020891">
    <property type="entry name" value="UPF0758_CS"/>
</dbReference>
<dbReference type="InterPro" id="IPR046778">
    <property type="entry name" value="UPF0758_N"/>
</dbReference>
<dbReference type="NCBIfam" id="NF000642">
    <property type="entry name" value="PRK00024.1"/>
    <property type="match status" value="1"/>
</dbReference>
<dbReference type="NCBIfam" id="TIGR00608">
    <property type="entry name" value="radc"/>
    <property type="match status" value="1"/>
</dbReference>
<dbReference type="PANTHER" id="PTHR30471">
    <property type="entry name" value="DNA REPAIR PROTEIN RADC"/>
    <property type="match status" value="1"/>
</dbReference>
<dbReference type="PANTHER" id="PTHR30471:SF3">
    <property type="entry name" value="UPF0758 PROTEIN YEES-RELATED"/>
    <property type="match status" value="1"/>
</dbReference>
<dbReference type="Pfam" id="PF04002">
    <property type="entry name" value="RadC"/>
    <property type="match status" value="1"/>
</dbReference>
<dbReference type="Pfam" id="PF20582">
    <property type="entry name" value="UPF0758_N"/>
    <property type="match status" value="1"/>
</dbReference>
<dbReference type="SUPFAM" id="SSF47781">
    <property type="entry name" value="RuvA domain 2-like"/>
    <property type="match status" value="1"/>
</dbReference>
<dbReference type="PROSITE" id="PS50249">
    <property type="entry name" value="MPN"/>
    <property type="match status" value="1"/>
</dbReference>
<dbReference type="PROSITE" id="PS01302">
    <property type="entry name" value="UPF0758"/>
    <property type="match status" value="1"/>
</dbReference>
<name>Y3915_XANAC</name>
<reference key="1">
    <citation type="journal article" date="2002" name="Nature">
        <title>Comparison of the genomes of two Xanthomonas pathogens with differing host specificities.</title>
        <authorList>
            <person name="da Silva A.C.R."/>
            <person name="Ferro J.A."/>
            <person name="Reinach F.C."/>
            <person name="Farah C.S."/>
            <person name="Furlan L.R."/>
            <person name="Quaggio R.B."/>
            <person name="Monteiro-Vitorello C.B."/>
            <person name="Van Sluys M.A."/>
            <person name="Almeida N.F. Jr."/>
            <person name="Alves L.M.C."/>
            <person name="do Amaral A.M."/>
            <person name="Bertolini M.C."/>
            <person name="Camargo L.E.A."/>
            <person name="Camarotte G."/>
            <person name="Cannavan F."/>
            <person name="Cardozo J."/>
            <person name="Chambergo F."/>
            <person name="Ciapina L.P."/>
            <person name="Cicarelli R.M.B."/>
            <person name="Coutinho L.L."/>
            <person name="Cursino-Santos J.R."/>
            <person name="El-Dorry H."/>
            <person name="Faria J.B."/>
            <person name="Ferreira A.J.S."/>
            <person name="Ferreira R.C.C."/>
            <person name="Ferro M.I.T."/>
            <person name="Formighieri E.F."/>
            <person name="Franco M.C."/>
            <person name="Greggio C.C."/>
            <person name="Gruber A."/>
            <person name="Katsuyama A.M."/>
            <person name="Kishi L.T."/>
            <person name="Leite R.P."/>
            <person name="Lemos E.G.M."/>
            <person name="Lemos M.V.F."/>
            <person name="Locali E.C."/>
            <person name="Machado M.A."/>
            <person name="Madeira A.M.B.N."/>
            <person name="Martinez-Rossi N.M."/>
            <person name="Martins E.C."/>
            <person name="Meidanis J."/>
            <person name="Menck C.F.M."/>
            <person name="Miyaki C.Y."/>
            <person name="Moon D.H."/>
            <person name="Moreira L.M."/>
            <person name="Novo M.T.M."/>
            <person name="Okura V.K."/>
            <person name="Oliveira M.C."/>
            <person name="Oliveira V.R."/>
            <person name="Pereira H.A."/>
            <person name="Rossi A."/>
            <person name="Sena J.A.D."/>
            <person name="Silva C."/>
            <person name="de Souza R.F."/>
            <person name="Spinola L.A.F."/>
            <person name="Takita M.A."/>
            <person name="Tamura R.E."/>
            <person name="Teixeira E.C."/>
            <person name="Tezza R.I.D."/>
            <person name="Trindade dos Santos M."/>
            <person name="Truffi D."/>
            <person name="Tsai S.M."/>
            <person name="White F.F."/>
            <person name="Setubal J.C."/>
            <person name="Kitajima J.P."/>
        </authorList>
    </citation>
    <scope>NUCLEOTIDE SEQUENCE [LARGE SCALE GENOMIC DNA]</scope>
    <source>
        <strain>306</strain>
    </source>
</reference>
<feature type="chain" id="PRO_0000190754" description="UPF0758 protein XAC3915">
    <location>
        <begin position="1"/>
        <end position="225"/>
    </location>
</feature>
<feature type="domain" description="MPN" evidence="1">
    <location>
        <begin position="102"/>
        <end position="224"/>
    </location>
</feature>
<feature type="short sequence motif" description="JAMM motif" evidence="1">
    <location>
        <begin position="173"/>
        <end position="186"/>
    </location>
</feature>
<feature type="binding site" evidence="1">
    <location>
        <position position="173"/>
    </location>
    <ligand>
        <name>Zn(2+)</name>
        <dbReference type="ChEBI" id="CHEBI:29105"/>
        <note>catalytic</note>
    </ligand>
</feature>
<feature type="binding site" evidence="1">
    <location>
        <position position="175"/>
    </location>
    <ligand>
        <name>Zn(2+)</name>
        <dbReference type="ChEBI" id="CHEBI:29105"/>
        <note>catalytic</note>
    </ligand>
</feature>
<feature type="binding site" evidence="1">
    <location>
        <position position="186"/>
    </location>
    <ligand>
        <name>Zn(2+)</name>
        <dbReference type="ChEBI" id="CHEBI:29105"/>
        <note>catalytic</note>
    </ligand>
</feature>
<comment type="similarity">
    <text evidence="2">Belongs to the UPF0758 family.</text>
</comment>
<proteinExistence type="inferred from homology"/>
<protein>
    <recommendedName>
        <fullName>UPF0758 protein XAC3915</fullName>
    </recommendedName>
</protein>
<organism>
    <name type="scientific">Xanthomonas axonopodis pv. citri (strain 306)</name>
    <dbReference type="NCBI Taxonomy" id="190486"/>
    <lineage>
        <taxon>Bacteria</taxon>
        <taxon>Pseudomonadati</taxon>
        <taxon>Pseudomonadota</taxon>
        <taxon>Gammaproteobacteria</taxon>
        <taxon>Lysobacterales</taxon>
        <taxon>Lysobacteraceae</taxon>
        <taxon>Xanthomonas</taxon>
    </lineage>
</organism>
<gene>
    <name type="ordered locus">XAC3915</name>
</gene>
<sequence>MHIHDWPTHERPREKLLARGATALSDAELLAILVGSGLRGQDAVQTARDLLHRHGPLRLLLDRPAKALTRLPGLGPASACKFAAAMELAQRHLMSALERGEALSDPPSVGRYFSQRLRARAYEVFAVLFLDNRHRAIAFEELFTGTIDGADIHPREVVRRALLHNAAAVIVGHNHPSGNPEPSEADRAVTKRLLDSLELVDIRLLDHFVIGDGRPVSFAERGWLE</sequence>
<accession>Q8PFR3</accession>
<evidence type="ECO:0000255" key="1">
    <source>
        <dbReference type="PROSITE-ProRule" id="PRU01182"/>
    </source>
</evidence>
<evidence type="ECO:0000305" key="2"/>
<keyword id="KW-0378">Hydrolase</keyword>
<keyword id="KW-0479">Metal-binding</keyword>
<keyword id="KW-0482">Metalloprotease</keyword>
<keyword id="KW-0645">Protease</keyword>
<keyword id="KW-0862">Zinc</keyword>